<gene>
    <name type="ordered locus">At5g12190</name>
    <name type="ORF">MXC9_15</name>
</gene>
<name>SF3B6_ARATH</name>
<comment type="function">
    <text evidence="1">May be necessary for the splicing of pre-mRNA.</text>
</comment>
<comment type="interaction">
    <interactant intactId="EBI-4459215">
        <id>Q9FMP4</id>
    </interactant>
    <interactant intactId="EBI-15192813">
        <id>Q9FDW1</id>
        <label>MYB44</label>
    </interactant>
    <organismsDiffer>false</organismsDiffer>
    <experiments>3</experiments>
</comment>
<comment type="subcellular location">
    <subcellularLocation>
        <location evidence="3">Nucleus</location>
    </subcellularLocation>
</comment>
<reference key="1">
    <citation type="journal article" date="1997" name="DNA Res.">
        <title>Structural analysis of Arabidopsis thaliana chromosome 5. III. Sequence features of the regions of 1,191,918 bp covered by seventeen physically assigned P1 clones.</title>
        <authorList>
            <person name="Nakamura Y."/>
            <person name="Sato S."/>
            <person name="Kaneko T."/>
            <person name="Kotani H."/>
            <person name="Asamizu E."/>
            <person name="Miyajima N."/>
            <person name="Tabata S."/>
        </authorList>
    </citation>
    <scope>NUCLEOTIDE SEQUENCE [LARGE SCALE GENOMIC DNA]</scope>
    <source>
        <strain>cv. Columbia</strain>
    </source>
</reference>
<reference key="2">
    <citation type="journal article" date="2017" name="Plant J.">
        <title>Araport11: a complete reannotation of the Arabidopsis thaliana reference genome.</title>
        <authorList>
            <person name="Cheng C.Y."/>
            <person name="Krishnakumar V."/>
            <person name="Chan A.P."/>
            <person name="Thibaud-Nissen F."/>
            <person name="Schobel S."/>
            <person name="Town C.D."/>
        </authorList>
    </citation>
    <scope>GENOME REANNOTATION</scope>
    <source>
        <strain>cv. Columbia</strain>
    </source>
</reference>
<reference key="3">
    <citation type="journal article" date="2003" name="Science">
        <title>Empirical analysis of transcriptional activity in the Arabidopsis genome.</title>
        <authorList>
            <person name="Yamada K."/>
            <person name="Lim J."/>
            <person name="Dale J.M."/>
            <person name="Chen H."/>
            <person name="Shinn P."/>
            <person name="Palm C.J."/>
            <person name="Southwick A.M."/>
            <person name="Wu H.C."/>
            <person name="Kim C.J."/>
            <person name="Nguyen M."/>
            <person name="Pham P.K."/>
            <person name="Cheuk R.F."/>
            <person name="Karlin-Newmann G."/>
            <person name="Liu S.X."/>
            <person name="Lam B."/>
            <person name="Sakano H."/>
            <person name="Wu T."/>
            <person name="Yu G."/>
            <person name="Miranda M."/>
            <person name="Quach H.L."/>
            <person name="Tripp M."/>
            <person name="Chang C.H."/>
            <person name="Lee J.M."/>
            <person name="Toriumi M.J."/>
            <person name="Chan M.M."/>
            <person name="Tang C.C."/>
            <person name="Onodera C.S."/>
            <person name="Deng J.M."/>
            <person name="Akiyama K."/>
            <person name="Ansari Y."/>
            <person name="Arakawa T."/>
            <person name="Banh J."/>
            <person name="Banno F."/>
            <person name="Bowser L."/>
            <person name="Brooks S.Y."/>
            <person name="Carninci P."/>
            <person name="Chao Q."/>
            <person name="Choy N."/>
            <person name="Enju A."/>
            <person name="Goldsmith A.D."/>
            <person name="Gurjal M."/>
            <person name="Hansen N.F."/>
            <person name="Hayashizaki Y."/>
            <person name="Johnson-Hopson C."/>
            <person name="Hsuan V.W."/>
            <person name="Iida K."/>
            <person name="Karnes M."/>
            <person name="Khan S."/>
            <person name="Koesema E."/>
            <person name="Ishida J."/>
            <person name="Jiang P.X."/>
            <person name="Jones T."/>
            <person name="Kawai J."/>
            <person name="Kamiya A."/>
            <person name="Meyers C."/>
            <person name="Nakajima M."/>
            <person name="Narusaka M."/>
            <person name="Seki M."/>
            <person name="Sakurai T."/>
            <person name="Satou M."/>
            <person name="Tamse R."/>
            <person name="Vaysberg M."/>
            <person name="Wallender E.K."/>
            <person name="Wong C."/>
            <person name="Yamamura Y."/>
            <person name="Yuan S."/>
            <person name="Shinozaki K."/>
            <person name="Davis R.W."/>
            <person name="Theologis A."/>
            <person name="Ecker J.R."/>
        </authorList>
    </citation>
    <scope>NUCLEOTIDE SEQUENCE [LARGE SCALE MRNA]</scope>
    <source>
        <strain>cv. Columbia</strain>
    </source>
</reference>
<reference key="4">
    <citation type="submission" date="2002-03" db="EMBL/GenBank/DDBJ databases">
        <title>Full-length cDNA from Arabidopsis thaliana.</title>
        <authorList>
            <person name="Brover V.V."/>
            <person name="Troukhan M.E."/>
            <person name="Alexandrov N.A."/>
            <person name="Lu Y.-P."/>
            <person name="Flavell R.B."/>
            <person name="Feldmann K.A."/>
        </authorList>
    </citation>
    <scope>NUCLEOTIDE SEQUENCE [LARGE SCALE MRNA]</scope>
</reference>
<keyword id="KW-0507">mRNA processing</keyword>
<keyword id="KW-0508">mRNA splicing</keyword>
<keyword id="KW-0539">Nucleus</keyword>
<keyword id="KW-1185">Reference proteome</keyword>
<keyword id="KW-0694">RNA-binding</keyword>
<accession>Q9FMP4</accession>
<feature type="chain" id="PRO_0000081729" description="Splicing factor 3B subunit 6-like protein">
    <location>
        <begin position="1"/>
        <end position="124"/>
    </location>
</feature>
<feature type="domain" description="RRM" evidence="2">
    <location>
        <begin position="19"/>
        <end position="94"/>
    </location>
</feature>
<feature type="region of interest" description="Interaction with pre-mRNA branch site" evidence="1">
    <location>
        <begin position="16"/>
        <end position="29"/>
    </location>
</feature>
<evidence type="ECO:0000250" key="1"/>
<evidence type="ECO:0000255" key="2">
    <source>
        <dbReference type="PROSITE-ProRule" id="PRU00176"/>
    </source>
</evidence>
<evidence type="ECO:0000305" key="3"/>
<dbReference type="EMBL" id="AB007727">
    <property type="protein sequence ID" value="BAB10037.1"/>
    <property type="molecule type" value="Genomic_DNA"/>
</dbReference>
<dbReference type="EMBL" id="CP002688">
    <property type="protein sequence ID" value="AED91772.1"/>
    <property type="molecule type" value="Genomic_DNA"/>
</dbReference>
<dbReference type="EMBL" id="BT002829">
    <property type="protein sequence ID" value="AAO22648.1"/>
    <property type="molecule type" value="mRNA"/>
</dbReference>
<dbReference type="EMBL" id="BT004430">
    <property type="protein sequence ID" value="AAO42424.1"/>
    <property type="molecule type" value="mRNA"/>
</dbReference>
<dbReference type="EMBL" id="AY088716">
    <property type="protein sequence ID" value="AAM67034.1"/>
    <property type="molecule type" value="mRNA"/>
</dbReference>
<dbReference type="RefSeq" id="NP_196780.1">
    <property type="nucleotide sequence ID" value="NM_121257.3"/>
</dbReference>
<dbReference type="SMR" id="Q9FMP4"/>
<dbReference type="BioGRID" id="16370">
    <property type="interactions" value="4"/>
</dbReference>
<dbReference type="FunCoup" id="Q9FMP4">
    <property type="interactions" value="4258"/>
</dbReference>
<dbReference type="IntAct" id="Q9FMP4">
    <property type="interactions" value="4"/>
</dbReference>
<dbReference type="STRING" id="3702.Q9FMP4"/>
<dbReference type="PaxDb" id="3702-AT5G12190.1"/>
<dbReference type="ProteomicsDB" id="232676"/>
<dbReference type="EnsemblPlants" id="AT5G12190.1">
    <property type="protein sequence ID" value="AT5G12190.1"/>
    <property type="gene ID" value="AT5G12190"/>
</dbReference>
<dbReference type="GeneID" id="831092"/>
<dbReference type="Gramene" id="AT5G12190.1">
    <property type="protein sequence ID" value="AT5G12190.1"/>
    <property type="gene ID" value="AT5G12190"/>
</dbReference>
<dbReference type="KEGG" id="ath:AT5G12190"/>
<dbReference type="Araport" id="AT5G12190"/>
<dbReference type="TAIR" id="AT5G12190"/>
<dbReference type="eggNOG" id="KOG0114">
    <property type="taxonomic scope" value="Eukaryota"/>
</dbReference>
<dbReference type="HOGENOM" id="CLU_012062_25_2_1"/>
<dbReference type="InParanoid" id="Q9FMP4"/>
<dbReference type="OMA" id="HQPDKMV"/>
<dbReference type="OrthoDB" id="275748at2759"/>
<dbReference type="PhylomeDB" id="Q9FMP4"/>
<dbReference type="PRO" id="PR:Q9FMP4"/>
<dbReference type="Proteomes" id="UP000006548">
    <property type="component" value="Chromosome 5"/>
</dbReference>
<dbReference type="ExpressionAtlas" id="Q9FMP4">
    <property type="expression patterns" value="baseline and differential"/>
</dbReference>
<dbReference type="GO" id="GO:0005634">
    <property type="term" value="C:nucleus"/>
    <property type="evidence" value="ECO:0007669"/>
    <property type="project" value="UniProtKB-SubCell"/>
</dbReference>
<dbReference type="GO" id="GO:0003723">
    <property type="term" value="F:RNA binding"/>
    <property type="evidence" value="ECO:0007669"/>
    <property type="project" value="UniProtKB-KW"/>
</dbReference>
<dbReference type="GO" id="GO:0006397">
    <property type="term" value="P:mRNA processing"/>
    <property type="evidence" value="ECO:0007669"/>
    <property type="project" value="UniProtKB-KW"/>
</dbReference>
<dbReference type="GO" id="GO:0008380">
    <property type="term" value="P:RNA splicing"/>
    <property type="evidence" value="ECO:0007669"/>
    <property type="project" value="UniProtKB-KW"/>
</dbReference>
<dbReference type="CDD" id="cd12241">
    <property type="entry name" value="RRM_SF3B14"/>
    <property type="match status" value="1"/>
</dbReference>
<dbReference type="FunFam" id="3.30.70.330:FF:000253">
    <property type="entry name" value="splicing factor 3B subunit 6-like protein"/>
    <property type="match status" value="1"/>
</dbReference>
<dbReference type="Gene3D" id="3.30.70.330">
    <property type="match status" value="1"/>
</dbReference>
<dbReference type="InterPro" id="IPR012677">
    <property type="entry name" value="Nucleotide-bd_a/b_plait_sf"/>
</dbReference>
<dbReference type="InterPro" id="IPR035979">
    <property type="entry name" value="RBD_domain_sf"/>
</dbReference>
<dbReference type="InterPro" id="IPR051847">
    <property type="entry name" value="RNA_proc/Spliceosome_comp"/>
</dbReference>
<dbReference type="InterPro" id="IPR000504">
    <property type="entry name" value="RRM_dom"/>
</dbReference>
<dbReference type="InterPro" id="IPR034150">
    <property type="entry name" value="SF3B6_RRM"/>
</dbReference>
<dbReference type="PANTHER" id="PTHR45880">
    <property type="entry name" value="RNA-BINDING MOTIF PROTEIN, X-LINKED 2"/>
    <property type="match status" value="1"/>
</dbReference>
<dbReference type="PANTHER" id="PTHR45880:SF1">
    <property type="entry name" value="RNA-BINDING MOTIF PROTEIN, X-LINKED 2"/>
    <property type="match status" value="1"/>
</dbReference>
<dbReference type="Pfam" id="PF00076">
    <property type="entry name" value="RRM_1"/>
    <property type="match status" value="1"/>
</dbReference>
<dbReference type="SMART" id="SM00360">
    <property type="entry name" value="RRM"/>
    <property type="match status" value="1"/>
</dbReference>
<dbReference type="SUPFAM" id="SSF54928">
    <property type="entry name" value="RNA-binding domain, RBD"/>
    <property type="match status" value="1"/>
</dbReference>
<dbReference type="PROSITE" id="PS50102">
    <property type="entry name" value="RRM"/>
    <property type="match status" value="1"/>
</dbReference>
<proteinExistence type="evidence at protein level"/>
<sequence length="124" mass="14383">MTTISLRKSNTRLPPEVNRVLYVRNLPFNITSEEMYDIFGKYGAIRQIRIGCDKATKGTAFVVYEDIYDAKNAVDHLSGFNVANRYLIVLYYQHAKMSKKFDQKKSEDEITKLQEKYGVSTKDK</sequence>
<protein>
    <recommendedName>
        <fullName>Splicing factor 3B subunit 6-like protein</fullName>
    </recommendedName>
    <alternativeName>
        <fullName>Pre-mRNA branch site p14-like protein</fullName>
    </alternativeName>
</protein>
<organism>
    <name type="scientific">Arabidopsis thaliana</name>
    <name type="common">Mouse-ear cress</name>
    <dbReference type="NCBI Taxonomy" id="3702"/>
    <lineage>
        <taxon>Eukaryota</taxon>
        <taxon>Viridiplantae</taxon>
        <taxon>Streptophyta</taxon>
        <taxon>Embryophyta</taxon>
        <taxon>Tracheophyta</taxon>
        <taxon>Spermatophyta</taxon>
        <taxon>Magnoliopsida</taxon>
        <taxon>eudicotyledons</taxon>
        <taxon>Gunneridae</taxon>
        <taxon>Pentapetalae</taxon>
        <taxon>rosids</taxon>
        <taxon>malvids</taxon>
        <taxon>Brassicales</taxon>
        <taxon>Brassicaceae</taxon>
        <taxon>Camelineae</taxon>
        <taxon>Arabidopsis</taxon>
    </lineage>
</organism>